<evidence type="ECO:0000256" key="1">
    <source>
        <dbReference type="SAM" id="MobiDB-lite"/>
    </source>
</evidence>
<evidence type="ECO:0000269" key="2">
    <source>
    </source>
</evidence>
<evidence type="ECO:0000269" key="3">
    <source>
    </source>
</evidence>
<evidence type="ECO:0000269" key="4">
    <source>
    </source>
</evidence>
<evidence type="ECO:0000269" key="5">
    <source>
    </source>
</evidence>
<evidence type="ECO:0000269" key="6">
    <source>
    </source>
</evidence>
<evidence type="ECO:0000305" key="7"/>
<evidence type="ECO:0007744" key="8">
    <source>
    </source>
</evidence>
<name>RAD1_YEAST</name>
<protein>
    <recommendedName>
        <fullName>DNA repair protein RAD1</fullName>
    </recommendedName>
</protein>
<sequence>MSQLFYQGDSDDELQEELTRQTTQASQSSKIKNEDEPDDSNHLNEVENEDSKVLDDDAVLYPLIPNEPDDIETSKPNINDIRPVDIQLTLPLPFQQKVVENSLITEDALIIMGKGLGLLDIVANLLHVLATPTSINGQLKRALVLVLNAKPIDNVRIKEALEELSWFSNTGKDDDDTAVESDDELFERPFNVVTADSLSIEKRRKLYISGGILSITSRILIVDLLSGIVHPNRVTGMLVLNADSLRHNSNESFILEIYRSKNTWGFIKAFSEAPETFVMEFSPLRTKMKELRLKNVLLWPRFRVEVSSCLNATNKTSHNKVIEVKVSLTNSMSQIQFGLMECLKKCIAELSRKNPELALDWWNMENVLDINFIRSIDSVMVPNWHRISYESKQLVKDIRFLRHLLKMLVTSDAVDFFGEIQLSLDANKPSVSRKYSESPWLLVDEAQLVISYAKKRIFYKNEYTLEENPKWEQLIHILHDISHERMTNHLQGPTLVACSDNLTCLELAKVLNASNKKRGVRQVLLNKLKWYRKQREETKKLVKEVQSQDTFPENATLNVSSTFSKEQVTTKRRRTRGASQVAAVEKLRNAGTNVDMEVVFEDHKLSEEIKKGSGDDLDDGQEENAANDSKIFEIQEQENEILIDDGDAEFDNGELEYVGDLPQHITTHFNKDLWAEHCNEYEYVDRQDEILISTFKSLNDNCSLQEMMPSYIIMFEPDISFIRQIEVYKAIVKDLQPKVYFMYYGESIEEQSHLTAIKREKDAFTKLIRENANLSHHFETNEDLSHYKNLAERKLKLSKLRKSNTRNAGGQQGFHNLTQDVVIVDTREFNASLPGLLYRYGIRVIPCMLTVGDYVITPDICLERKSISDLIGSLQNNRLANQCKKMLKYYAYPTLLIEFDEGQSFSLEPFSERRNYKNKDISTVHPISSKLSQDEIQLKLAKLVLRFPTLKIIWSSSPLQTVNIILELKLGREQPDPSNAVILGTNKVRSDFNSTAKGLKDGDNESKFKRLLNVPGVSKIDYFNLRKKIKSFNKLQKLSWNEINELINDEDLTDRIYYFLRTEKEEQEQESTDENLESPGKTTDDNALHDHHNDVPEAPV</sequence>
<comment type="function">
    <text evidence="5">Involved in nucleotide excision repair of DNA damaged with UV light, bulky adducts, or cross-linking agents. Along with RAD10 forms an endonuclease that specifically degrades single-stranded DNA.</text>
</comment>
<comment type="subunit">
    <text evidence="3 4 5 6">Component of the nucleotide excision repair factor 1 (NEF1) complex consisting of RAD1, RAD10 and RAD14. Interacts with SAW1.</text>
</comment>
<comment type="interaction">
    <interactant intactId="EBI-14752">
        <id>P06777</id>
    </interactant>
    <interactant intactId="EBI-14637">
        <id>P06838</id>
        <label>RAD10</label>
    </interactant>
    <organismsDiffer>false</organismsDiffer>
    <experiments>12</experiments>
</comment>
<comment type="interaction">
    <interactant intactId="EBI-14752">
        <id>P06777</id>
    </interactant>
    <interactant intactId="EBI-14641">
        <id>P28519</id>
        <label>RAD14</label>
    </interactant>
    <organismsDiffer>false</organismsDiffer>
    <experiments>4</experiments>
</comment>
<comment type="interaction">
    <interactant intactId="EBI-14752">
        <id>P06777</id>
    </interactant>
    <interactant intactId="EBI-20627">
        <id>P39735</id>
        <label>SAW1</label>
    </interactant>
    <organismsDiffer>false</organismsDiffer>
    <experiments>5</experiments>
</comment>
<comment type="interaction">
    <interactant intactId="EBI-14752">
        <id>P06777</id>
    </interactant>
    <interactant intactId="EBI-37788">
        <id>Q12098</id>
        <label>SLX4</label>
    </interactant>
    <organismsDiffer>false</organismsDiffer>
    <experiments>3</experiments>
</comment>
<comment type="subcellular location">
    <subcellularLocation>
        <location>Nucleus</location>
    </subcellularLocation>
</comment>
<comment type="miscellaneous">
    <text evidence="2">Present with 1400 molecules/cell in log phase SD medium.</text>
</comment>
<comment type="similarity">
    <text evidence="7">Belongs to the XPF family.</text>
</comment>
<comment type="sequence caution" evidence="7">
    <conflict type="frameshift">
        <sequence resource="EMBL-CDS" id="AAA34929"/>
    </conflict>
</comment>
<reference key="1">
    <citation type="journal article" date="1987" name="Mol. Cell. Biol.">
        <title>Nucleotide sequence and functional analysis of the RAD1 gene of Saccharomyces cerevisiae.</title>
        <authorList>
            <person name="Reynolds P."/>
            <person name="Prakash L."/>
            <person name="Prakash S."/>
        </authorList>
    </citation>
    <scope>NUCLEOTIDE SEQUENCE [GENOMIC DNA]</scope>
</reference>
<reference key="2">
    <citation type="journal article" date="1997" name="Nature">
        <title>The nucleotide sequence of Saccharomyces cerevisiae chromosome XVI.</title>
        <authorList>
            <person name="Bussey H."/>
            <person name="Storms R.K."/>
            <person name="Ahmed A."/>
            <person name="Albermann K."/>
            <person name="Allen E."/>
            <person name="Ansorge W."/>
            <person name="Araujo R."/>
            <person name="Aparicio A."/>
            <person name="Barrell B.G."/>
            <person name="Badcock K."/>
            <person name="Benes V."/>
            <person name="Botstein D."/>
            <person name="Bowman S."/>
            <person name="Brueckner M."/>
            <person name="Carpenter J."/>
            <person name="Cherry J.M."/>
            <person name="Chung E."/>
            <person name="Churcher C.M."/>
            <person name="Coster F."/>
            <person name="Davis K."/>
            <person name="Davis R.W."/>
            <person name="Dietrich F.S."/>
            <person name="Delius H."/>
            <person name="DiPaolo T."/>
            <person name="Dubois E."/>
            <person name="Duesterhoeft A."/>
            <person name="Duncan M."/>
            <person name="Floeth M."/>
            <person name="Fortin N."/>
            <person name="Friesen J.D."/>
            <person name="Fritz C."/>
            <person name="Goffeau A."/>
            <person name="Hall J."/>
            <person name="Hebling U."/>
            <person name="Heumann K."/>
            <person name="Hilbert H."/>
            <person name="Hillier L.W."/>
            <person name="Hunicke-Smith S."/>
            <person name="Hyman R.W."/>
            <person name="Johnston M."/>
            <person name="Kalman S."/>
            <person name="Kleine K."/>
            <person name="Komp C."/>
            <person name="Kurdi O."/>
            <person name="Lashkari D."/>
            <person name="Lew H."/>
            <person name="Lin A."/>
            <person name="Lin D."/>
            <person name="Louis E.J."/>
            <person name="Marathe R."/>
            <person name="Messenguy F."/>
            <person name="Mewes H.-W."/>
            <person name="Mirtipati S."/>
            <person name="Moestl D."/>
            <person name="Mueller-Auer S."/>
            <person name="Namath A."/>
            <person name="Nentwich U."/>
            <person name="Oefner P."/>
            <person name="Pearson D."/>
            <person name="Petel F.X."/>
            <person name="Pohl T.M."/>
            <person name="Purnelle B."/>
            <person name="Rajandream M.A."/>
            <person name="Rechmann S."/>
            <person name="Rieger M."/>
            <person name="Riles L."/>
            <person name="Roberts D."/>
            <person name="Schaefer M."/>
            <person name="Scharfe M."/>
            <person name="Scherens B."/>
            <person name="Schramm S."/>
            <person name="Schroeder M."/>
            <person name="Sdicu A.-M."/>
            <person name="Tettelin H."/>
            <person name="Urrestarazu L.A."/>
            <person name="Ushinsky S."/>
            <person name="Vierendeels F."/>
            <person name="Vissers S."/>
            <person name="Voss H."/>
            <person name="Walsh S.V."/>
            <person name="Wambutt R."/>
            <person name="Wang Y."/>
            <person name="Wedler E."/>
            <person name="Wedler H."/>
            <person name="Winnett E."/>
            <person name="Zhong W.-W."/>
            <person name="Zollner A."/>
            <person name="Vo D.H."/>
            <person name="Hani J."/>
        </authorList>
    </citation>
    <scope>NUCLEOTIDE SEQUENCE [LARGE SCALE GENOMIC DNA]</scope>
    <source>
        <strain>ATCC 204508 / S288c</strain>
    </source>
</reference>
<reference key="3">
    <citation type="journal article" date="2014" name="G3 (Bethesda)">
        <title>The reference genome sequence of Saccharomyces cerevisiae: Then and now.</title>
        <authorList>
            <person name="Engel S.R."/>
            <person name="Dietrich F.S."/>
            <person name="Fisk D.G."/>
            <person name="Binkley G."/>
            <person name="Balakrishnan R."/>
            <person name="Costanzo M.C."/>
            <person name="Dwight S.S."/>
            <person name="Hitz B.C."/>
            <person name="Karra K."/>
            <person name="Nash R.S."/>
            <person name="Weng S."/>
            <person name="Wong E.D."/>
            <person name="Lloyd P."/>
            <person name="Skrzypek M.S."/>
            <person name="Miyasato S.R."/>
            <person name="Simison M."/>
            <person name="Cherry J.M."/>
        </authorList>
    </citation>
    <scope>GENOME REANNOTATION</scope>
    <source>
        <strain>ATCC 204508 / S288c</strain>
    </source>
</reference>
<reference key="4">
    <citation type="journal article" date="1984" name="Mol. Cell. Biol.">
        <title>Molecular cloning and nucleotide sequence analysis of the Saccharomyces cerevisiae RAD1 gene.</title>
        <authorList>
            <person name="Yang E."/>
            <person name="Friedberg E.C."/>
        </authorList>
    </citation>
    <scope>NUCLEOTIDE SEQUENCE [GENOMIC DNA] OF 1-1035</scope>
</reference>
<reference key="5">
    <citation type="journal article" date="1993" name="Nature">
        <title>Yeast DNA repair and recombination proteins Rad1 and Rad10 constitute a single-stranded-DNA endonuclease.</title>
        <authorList>
            <person name="Tomkinson A.E."/>
            <person name="Bardwell A.J."/>
            <person name="Bardwell L."/>
            <person name="Tappe N.J."/>
            <person name="Friedberg E.C."/>
        </authorList>
    </citation>
    <scope>FUNCTION</scope>
    <scope>INTERACTION WITH RAD10</scope>
</reference>
<reference key="6">
    <citation type="journal article" date="1996" name="J. Biol. Chem.">
        <title>Nucleotide excision repair in yeast is mediated by sequential assembly of repair factors and not by a pre-assembled repairosome.</title>
        <authorList>
            <person name="Guzder S.N."/>
            <person name="Sung P."/>
            <person name="Prakash L."/>
            <person name="Prakash S."/>
        </authorList>
    </citation>
    <scope>IDENTIFICATION IN THE NEF1 COMPLEX</scope>
</reference>
<reference key="7">
    <citation type="journal article" date="2003" name="Nature">
        <title>Global analysis of protein expression in yeast.</title>
        <authorList>
            <person name="Ghaemmaghami S."/>
            <person name="Huh W.-K."/>
            <person name="Bower K."/>
            <person name="Howson R.W."/>
            <person name="Belle A."/>
            <person name="Dephoure N."/>
            <person name="O'Shea E.K."/>
            <person name="Weissman J.S."/>
        </authorList>
    </citation>
    <scope>LEVEL OF PROTEIN EXPRESSION [LARGE SCALE ANALYSIS]</scope>
</reference>
<reference key="8">
    <citation type="journal article" date="2007" name="Genome Res.">
        <title>Examining protein protein interactions using endogenously tagged yeast arrays: the cross-and-capture system.</title>
        <authorList>
            <person name="Suter B."/>
            <person name="Fetchko M.J."/>
            <person name="Imhof R."/>
            <person name="Graham C.I."/>
            <person name="Stoffel-Studer I."/>
            <person name="Zbinden C."/>
            <person name="Raghavan M."/>
            <person name="Lopez L."/>
            <person name="Beneti L."/>
            <person name="Hort J."/>
            <person name="Fillingham J."/>
            <person name="Greenblatt J.F."/>
            <person name="Giaever G."/>
            <person name="Nislow C."/>
            <person name="Stagljar I."/>
        </authorList>
    </citation>
    <scope>INTERACTION WITH SAW1</scope>
</reference>
<reference key="9">
    <citation type="journal article" date="2008" name="Mol. Cell">
        <title>Microarray-based genetic screen defines SAW1, a gene required for Rad1/Rad10-dependent processing of recombination intermediates.</title>
        <authorList>
            <person name="Li F."/>
            <person name="Dong J."/>
            <person name="Pan X."/>
            <person name="Oum J.-H."/>
            <person name="Boeke J.D."/>
            <person name="Lee S.E."/>
        </authorList>
    </citation>
    <scope>INTERACTION WITH SAW1</scope>
</reference>
<reference key="10">
    <citation type="journal article" date="2009" name="Science">
        <title>Global analysis of Cdk1 substrate phosphorylation sites provides insights into evolution.</title>
        <authorList>
            <person name="Holt L.J."/>
            <person name="Tuch B.B."/>
            <person name="Villen J."/>
            <person name="Johnson A.D."/>
            <person name="Gygi S.P."/>
            <person name="Morgan D.O."/>
        </authorList>
    </citation>
    <scope>PHOSPHORYLATION [LARGE SCALE ANALYSIS] AT SER-613; SER-1071 AND THR-1072</scope>
    <scope>IDENTIFICATION BY MASS SPECTROMETRY [LARGE SCALE ANALYSIS]</scope>
</reference>
<gene>
    <name type="primary">RAD1</name>
    <name type="ordered locus">YPL022W</name>
</gene>
<accession>P06777</accession>
<accession>D6W3Z0</accession>
<dbReference type="EMBL" id="M15435">
    <property type="protein sequence ID" value="AAA34934.1"/>
    <property type="molecule type" value="Genomic_DNA"/>
</dbReference>
<dbReference type="EMBL" id="U36624">
    <property type="protein sequence ID" value="AAB68165.1"/>
    <property type="molecule type" value="Genomic_DNA"/>
</dbReference>
<dbReference type="EMBL" id="K02070">
    <property type="protein sequence ID" value="AAA34929.1"/>
    <property type="status" value="ALT_FRAME"/>
    <property type="molecule type" value="Genomic_DNA"/>
</dbReference>
<dbReference type="EMBL" id="BK006949">
    <property type="protein sequence ID" value="DAA11406.1"/>
    <property type="molecule type" value="Genomic_DNA"/>
</dbReference>
<dbReference type="PIR" id="A26129">
    <property type="entry name" value="DDBYD1"/>
</dbReference>
<dbReference type="RefSeq" id="NP_015303.1">
    <property type="nucleotide sequence ID" value="NM_001183836.1"/>
</dbReference>
<dbReference type="SMR" id="P06777"/>
<dbReference type="BioGRID" id="36155">
    <property type="interactions" value="499"/>
</dbReference>
<dbReference type="ComplexPortal" id="CPX-1362">
    <property type="entry name" value="SLX4-RAD1-RAD10 endonuclease complex"/>
</dbReference>
<dbReference type="ComplexPortal" id="CPX-1363">
    <property type="entry name" value="SAW1-RAD1-RAD10 endonuclease complex"/>
</dbReference>
<dbReference type="ComplexPortal" id="CPX-1708">
    <property type="entry name" value="Nucleotide-excision repair factor 1 complex"/>
</dbReference>
<dbReference type="DIP" id="DIP-2424N"/>
<dbReference type="FunCoup" id="P06777">
    <property type="interactions" value="1060"/>
</dbReference>
<dbReference type="IntAct" id="P06777">
    <property type="interactions" value="45"/>
</dbReference>
<dbReference type="MINT" id="P06777"/>
<dbReference type="STRING" id="4932.YPL022W"/>
<dbReference type="iPTMnet" id="P06777"/>
<dbReference type="PaxDb" id="4932-YPL022W"/>
<dbReference type="PeptideAtlas" id="P06777"/>
<dbReference type="EnsemblFungi" id="YPL022W_mRNA">
    <property type="protein sequence ID" value="YPL022W"/>
    <property type="gene ID" value="YPL022W"/>
</dbReference>
<dbReference type="GeneID" id="856085"/>
<dbReference type="KEGG" id="sce:YPL022W"/>
<dbReference type="AGR" id="SGD:S000005943"/>
<dbReference type="SGD" id="S000005943">
    <property type="gene designation" value="RAD1"/>
</dbReference>
<dbReference type="VEuPathDB" id="FungiDB:YPL022W"/>
<dbReference type="eggNOG" id="KOG0442">
    <property type="taxonomic scope" value="Eukaryota"/>
</dbReference>
<dbReference type="GeneTree" id="ENSGT00390000004394"/>
<dbReference type="HOGENOM" id="CLU_002265_2_0_1"/>
<dbReference type="InParanoid" id="P06777"/>
<dbReference type="OMA" id="THILDIM"/>
<dbReference type="OrthoDB" id="361020at2759"/>
<dbReference type="BioCyc" id="YEAST:G3O-33940-MONOMER"/>
<dbReference type="Reactome" id="R-SCE-6782135">
    <property type="pathway name" value="Dual incision in TC-NER"/>
</dbReference>
<dbReference type="BioGRID-ORCS" id="856085">
    <property type="hits" value="0 hits in 10 CRISPR screens"/>
</dbReference>
<dbReference type="PRO" id="PR:P06777"/>
<dbReference type="Proteomes" id="UP000002311">
    <property type="component" value="Chromosome XVI"/>
</dbReference>
<dbReference type="RNAct" id="P06777">
    <property type="molecule type" value="protein"/>
</dbReference>
<dbReference type="GO" id="GO:1905348">
    <property type="term" value="C:endonuclease complex"/>
    <property type="evidence" value="ECO:0000353"/>
    <property type="project" value="ComplexPortal"/>
</dbReference>
<dbReference type="GO" id="GO:0000110">
    <property type="term" value="C:nucleotide-excision repair factor 1 complex"/>
    <property type="evidence" value="ECO:0000353"/>
    <property type="project" value="ComplexPortal"/>
</dbReference>
<dbReference type="GO" id="GO:0005634">
    <property type="term" value="C:nucleus"/>
    <property type="evidence" value="ECO:0000314"/>
    <property type="project" value="SGD"/>
</dbReference>
<dbReference type="GO" id="GO:0003684">
    <property type="term" value="F:damaged DNA binding"/>
    <property type="evidence" value="ECO:0000318"/>
    <property type="project" value="GO_Central"/>
</dbReference>
<dbReference type="GO" id="GO:0004520">
    <property type="term" value="F:DNA endonuclease activity"/>
    <property type="evidence" value="ECO:0007669"/>
    <property type="project" value="InterPro"/>
</dbReference>
<dbReference type="GO" id="GO:0003697">
    <property type="term" value="F:single-stranded DNA binding"/>
    <property type="evidence" value="ECO:0000314"/>
    <property type="project" value="SGD"/>
</dbReference>
<dbReference type="GO" id="GO:0006277">
    <property type="term" value="P:DNA amplification"/>
    <property type="evidence" value="ECO:0000315"/>
    <property type="project" value="SGD"/>
</dbReference>
<dbReference type="GO" id="GO:0000724">
    <property type="term" value="P:double-strand break repair via homologous recombination"/>
    <property type="evidence" value="ECO:0000318"/>
    <property type="project" value="GO_Central"/>
</dbReference>
<dbReference type="GO" id="GO:0000736">
    <property type="term" value="P:double-strand break repair via single-strand annealing, removal of nonhomologous ends"/>
    <property type="evidence" value="ECO:0000315"/>
    <property type="project" value="SGD"/>
</dbReference>
<dbReference type="GO" id="GO:0000710">
    <property type="term" value="P:meiotic mismatch repair"/>
    <property type="evidence" value="ECO:0000315"/>
    <property type="project" value="SGD"/>
</dbReference>
<dbReference type="GO" id="GO:0006312">
    <property type="term" value="P:mitotic recombination"/>
    <property type="evidence" value="ECO:0000315"/>
    <property type="project" value="SGD"/>
</dbReference>
<dbReference type="GO" id="GO:0006289">
    <property type="term" value="P:nucleotide-excision repair"/>
    <property type="evidence" value="ECO:0000314"/>
    <property type="project" value="SGD"/>
</dbReference>
<dbReference type="GO" id="GO:1901255">
    <property type="term" value="P:nucleotide-excision repair involved in interstrand cross-link repair"/>
    <property type="evidence" value="ECO:0000318"/>
    <property type="project" value="GO_Central"/>
</dbReference>
<dbReference type="GO" id="GO:0000715">
    <property type="term" value="P:nucleotide-excision repair, DNA damage recognition"/>
    <property type="evidence" value="ECO:0000314"/>
    <property type="project" value="ComplexPortal"/>
</dbReference>
<dbReference type="GO" id="GO:0000735">
    <property type="term" value="P:removal of nonhomologous ends"/>
    <property type="evidence" value="ECO:0000315"/>
    <property type="project" value="SGD"/>
</dbReference>
<dbReference type="GO" id="GO:0000712">
    <property type="term" value="P:resolution of meiotic recombination intermediates"/>
    <property type="evidence" value="ECO:0000318"/>
    <property type="project" value="GO_Central"/>
</dbReference>
<dbReference type="CDD" id="cd20078">
    <property type="entry name" value="XPF_nuclease_XPF_euk"/>
    <property type="match status" value="1"/>
</dbReference>
<dbReference type="FunFam" id="3.40.50.10130:FF:000009">
    <property type="entry name" value="UV endonuclease"/>
    <property type="match status" value="1"/>
</dbReference>
<dbReference type="Gene3D" id="3.40.50.10130">
    <property type="match status" value="1"/>
</dbReference>
<dbReference type="Gene3D" id="1.10.150.20">
    <property type="entry name" value="5' to 3' exonuclease, C-terminal subdomain"/>
    <property type="match status" value="1"/>
</dbReference>
<dbReference type="InterPro" id="IPR006166">
    <property type="entry name" value="ERCC4_domain"/>
</dbReference>
<dbReference type="InterPro" id="IPR011335">
    <property type="entry name" value="Restrct_endonuc-II-like"/>
</dbReference>
<dbReference type="InterPro" id="IPR010994">
    <property type="entry name" value="RuvA_2-like"/>
</dbReference>
<dbReference type="InterPro" id="IPR006167">
    <property type="entry name" value="XPF"/>
</dbReference>
<dbReference type="InterPro" id="IPR047520">
    <property type="entry name" value="XPF_nuclease"/>
</dbReference>
<dbReference type="NCBIfam" id="TIGR00596">
    <property type="entry name" value="rad1"/>
    <property type="match status" value="1"/>
</dbReference>
<dbReference type="PANTHER" id="PTHR10150">
    <property type="entry name" value="DNA REPAIR ENDONUCLEASE XPF"/>
    <property type="match status" value="1"/>
</dbReference>
<dbReference type="PANTHER" id="PTHR10150:SF0">
    <property type="entry name" value="DNA REPAIR ENDONUCLEASE XPF"/>
    <property type="match status" value="1"/>
</dbReference>
<dbReference type="Pfam" id="PF02732">
    <property type="entry name" value="ERCC4"/>
    <property type="match status" value="1"/>
</dbReference>
<dbReference type="SMART" id="SM00891">
    <property type="entry name" value="ERCC4"/>
    <property type="match status" value="1"/>
</dbReference>
<dbReference type="SUPFAM" id="SSF52980">
    <property type="entry name" value="Restriction endonuclease-like"/>
    <property type="match status" value="1"/>
</dbReference>
<dbReference type="SUPFAM" id="SSF47781">
    <property type="entry name" value="RuvA domain 2-like"/>
    <property type="match status" value="1"/>
</dbReference>
<keyword id="KW-0227">DNA damage</keyword>
<keyword id="KW-0234">DNA repair</keyword>
<keyword id="KW-0238">DNA-binding</keyword>
<keyword id="KW-0255">Endonuclease</keyword>
<keyword id="KW-0378">Hydrolase</keyword>
<keyword id="KW-0540">Nuclease</keyword>
<keyword id="KW-0539">Nucleus</keyword>
<keyword id="KW-0597">Phosphoprotein</keyword>
<keyword id="KW-1185">Reference proteome</keyword>
<feature type="chain" id="PRO_0000198857" description="DNA repair protein RAD1">
    <location>
        <begin position="1"/>
        <end position="1100"/>
    </location>
</feature>
<feature type="domain" description="ERCC4">
    <location>
        <begin position="821"/>
        <end position="901"/>
    </location>
</feature>
<feature type="region of interest" description="Disordered" evidence="1">
    <location>
        <begin position="1"/>
        <end position="47"/>
    </location>
</feature>
<feature type="region of interest" description="Disordered" evidence="1">
    <location>
        <begin position="1063"/>
        <end position="1100"/>
    </location>
</feature>
<feature type="compositionally biased region" description="Polar residues" evidence="1">
    <location>
        <begin position="20"/>
        <end position="30"/>
    </location>
</feature>
<feature type="compositionally biased region" description="Basic and acidic residues" evidence="1">
    <location>
        <begin position="31"/>
        <end position="47"/>
    </location>
</feature>
<feature type="compositionally biased region" description="Acidic residues" evidence="1">
    <location>
        <begin position="1065"/>
        <end position="1076"/>
    </location>
</feature>
<feature type="compositionally biased region" description="Basic and acidic residues" evidence="1">
    <location>
        <begin position="1082"/>
        <end position="1100"/>
    </location>
</feature>
<feature type="modified residue" description="Phosphoserine" evidence="8">
    <location>
        <position position="613"/>
    </location>
</feature>
<feature type="modified residue" description="Phosphoserine" evidence="8">
    <location>
        <position position="1071"/>
    </location>
</feature>
<feature type="modified residue" description="Phosphothreonine" evidence="8">
    <location>
        <position position="1072"/>
    </location>
</feature>
<feature type="sequence conflict" description="In Ref. 4; AAA34929." evidence="7" ref="4">
    <original>D</original>
    <variation>N</variation>
    <location>
        <position position="223"/>
    </location>
</feature>
<feature type="sequence conflict" description="In Ref. 4; AAA34929." evidence="7" ref="4">
    <original>C</original>
    <variation>Y</variation>
    <location>
        <position position="883"/>
    </location>
</feature>
<feature type="sequence conflict" description="In Ref. 4; AAA34929." evidence="7" ref="4">
    <original>M</original>
    <variation>I</variation>
    <location>
        <position position="886"/>
    </location>
</feature>
<feature type="sequence conflict" description="In Ref. 4; AAA34929." evidence="7" ref="4">
    <original>E</original>
    <variation>K</variation>
    <location>
        <position position="912"/>
    </location>
</feature>
<feature type="sequence conflict" description="In Ref. 4; AAA34929." evidence="7" ref="4">
    <original>V</original>
    <variation>I</variation>
    <location>
        <position position="924"/>
    </location>
</feature>
<feature type="sequence conflict" description="In Ref. 4; AAA34929." evidence="7" ref="4">
    <original>G</original>
    <variation>R</variation>
    <location>
        <position position="1016"/>
    </location>
</feature>
<organism>
    <name type="scientific">Saccharomyces cerevisiae (strain ATCC 204508 / S288c)</name>
    <name type="common">Baker's yeast</name>
    <dbReference type="NCBI Taxonomy" id="559292"/>
    <lineage>
        <taxon>Eukaryota</taxon>
        <taxon>Fungi</taxon>
        <taxon>Dikarya</taxon>
        <taxon>Ascomycota</taxon>
        <taxon>Saccharomycotina</taxon>
        <taxon>Saccharomycetes</taxon>
        <taxon>Saccharomycetales</taxon>
        <taxon>Saccharomycetaceae</taxon>
        <taxon>Saccharomyces</taxon>
    </lineage>
</organism>
<proteinExistence type="evidence at protein level"/>